<comment type="function">
    <text evidence="1 2">Regulates the G1/S phase transition of the cell cycle by binding and activating CDK1 and CDK2. Contributes to CDK2 activation without promoting CDK2 phosphorylation, by inducing a conformation change of the CDK2 T-loop that obstructs the substrate-binding cleft prior to kinase activation. Interferes with CDKN1B-mediated inhibition of CDK2. Mediates cell survival during the DNA damage process through activation of CDK2.</text>
</comment>
<comment type="subunit">
    <text evidence="1 2">Interacts with CDK1 (By similarity). Interacts with CDK2. May interact with CDKN1B/KIP1. Identified in a complex with CDK2 and CDKN1B/KIP1, where it interacts primarily with CDK2 (By similarity).</text>
</comment>
<comment type="subcellular location">
    <subcellularLocation>
        <location evidence="2">Nucleus</location>
    </subcellularLocation>
</comment>
<comment type="domain">
    <text evidence="1">The C-terminus is required for CDK2-activation, but not CDK2-binding.</text>
</comment>
<comment type="similarity">
    <text evidence="3">Belongs to the Speedy/Ringo family.</text>
</comment>
<keyword id="KW-0131">Cell cycle</keyword>
<keyword id="KW-0217">Developmental protein</keyword>
<keyword id="KW-0227">DNA damage</keyword>
<keyword id="KW-0539">Nucleus</keyword>
<keyword id="KW-0597">Phosphoprotein</keyword>
<keyword id="KW-1185">Reference proteome</keyword>
<evidence type="ECO:0000250" key="1">
    <source>
        <dbReference type="UniProtKB" id="Q5IBH7"/>
    </source>
</evidence>
<evidence type="ECO:0000250" key="2">
    <source>
        <dbReference type="UniProtKB" id="Q5MJ70"/>
    </source>
</evidence>
<evidence type="ECO:0000305" key="3"/>
<evidence type="ECO:0000312" key="4">
    <source>
        <dbReference type="EMBL" id="AAM09568.1"/>
    </source>
</evidence>
<evidence type="ECO:0000312" key="5">
    <source>
        <dbReference type="RGD" id="621730"/>
    </source>
</evidence>
<accession>Q8R496</accession>
<accession>Q68G34</accession>
<protein>
    <recommendedName>
        <fullName>Speedy protein A</fullName>
    </recommendedName>
    <alternativeName>
        <fullName>GS4</fullName>
    </alternativeName>
    <alternativeName>
        <fullName>Rapid inducer of G2/M progression in oocytes A</fullName>
        <shortName>RINGO A</shortName>
    </alternativeName>
    <alternativeName>
        <fullName>Speedy-1</fullName>
        <shortName>Spy1</shortName>
    </alternativeName>
</protein>
<sequence length="312" mass="36223">MRHNQMCCETPPTVTVHVKSGSNRSHQTRKPVSLKRPILKDSWQASEKNAHNNKPKRPRGPCLIIQRQEMTAFFKLFDDDLIQDFLWMDCCCKIADKYLLAMTFVYFKRAKFTISEHTRINFFIALYLANTVEEDEEEAKYEIFPWALGKNWRKLFPNFLKLRDQLWDRIDYRAIVSRRCCEEVMAIAPSHYIWQRERSVHHSGAARNYNRDEVHLPRGPSATPVDCSLCGKKGRYVRLGLSSSSSSSSDIVELTGKRSQELHNSLSMDMIGDPSQANTYSQVANDHQSKKENETNFVKKTKSMGWFAESEE</sequence>
<name>SPDYA_RAT</name>
<proteinExistence type="evidence at transcript level"/>
<gene>
    <name evidence="2" type="primary">Spdya</name>
    <name evidence="5" type="synonym">Spdy1</name>
</gene>
<feature type="chain" id="PRO_0000234114" description="Speedy protein A">
    <location>
        <begin position="1"/>
        <end position="312"/>
    </location>
</feature>
<feature type="region of interest" description="Speedy/Ringo box; Required for CDK-binding" evidence="1">
    <location>
        <begin position="67"/>
        <end position="199"/>
    </location>
</feature>
<feature type="modified residue" description="Phosphoserine" evidence="1">
    <location>
        <position position="221"/>
    </location>
</feature>
<feature type="modified residue" description="Phosphothreonine" evidence="1">
    <location>
        <position position="223"/>
    </location>
</feature>
<feature type="sequence conflict" description="In Ref. 2; AAM09568." evidence="3" ref="2">
    <location>
        <position position="283"/>
    </location>
</feature>
<dbReference type="EMBL" id="AF492385">
    <property type="protein sequence ID" value="AAM09568.1"/>
    <property type="molecule type" value="mRNA"/>
</dbReference>
<dbReference type="EMBL" id="BC078729">
    <property type="protein sequence ID" value="AAH78729.1"/>
    <property type="molecule type" value="mRNA"/>
</dbReference>
<dbReference type="RefSeq" id="NP_620210.1">
    <property type="nucleotide sequence ID" value="NM_138855.2"/>
</dbReference>
<dbReference type="RefSeq" id="XP_006239830.1">
    <property type="nucleotide sequence ID" value="XM_006239768.3"/>
</dbReference>
<dbReference type="RefSeq" id="XP_063117597.1">
    <property type="nucleotide sequence ID" value="XM_063261527.1"/>
</dbReference>
<dbReference type="RefSeq" id="XP_063117600.1">
    <property type="nucleotide sequence ID" value="XM_063261530.1"/>
</dbReference>
<dbReference type="SMR" id="Q8R496"/>
<dbReference type="FunCoup" id="Q8R496">
    <property type="interactions" value="597"/>
</dbReference>
<dbReference type="STRING" id="10116.ENSRNOP00000074240"/>
<dbReference type="GlyGen" id="Q8R496">
    <property type="glycosylation" value="1 site"/>
</dbReference>
<dbReference type="PhosphoSitePlus" id="Q8R496"/>
<dbReference type="PaxDb" id="10116-ENSRNOP00000006073"/>
<dbReference type="Ensembl" id="ENSRNOT00000006073.6">
    <property type="protein sequence ID" value="ENSRNOP00000006073.2"/>
    <property type="gene ID" value="ENSRNOG00000004534.6"/>
</dbReference>
<dbReference type="GeneID" id="192209"/>
<dbReference type="KEGG" id="rno:192209"/>
<dbReference type="UCSC" id="RGD:621730">
    <property type="organism name" value="rat"/>
</dbReference>
<dbReference type="AGR" id="RGD:621730"/>
<dbReference type="CTD" id="245711"/>
<dbReference type="RGD" id="621730">
    <property type="gene designation" value="Spdya"/>
</dbReference>
<dbReference type="eggNOG" id="KOG3938">
    <property type="taxonomic scope" value="Eukaryota"/>
</dbReference>
<dbReference type="GeneTree" id="ENSGT00940000154524"/>
<dbReference type="InParanoid" id="Q8R496"/>
<dbReference type="OMA" id="VCQTPPT"/>
<dbReference type="OrthoDB" id="9442170at2759"/>
<dbReference type="PhylomeDB" id="Q8R496"/>
<dbReference type="TreeFam" id="TF329827"/>
<dbReference type="PRO" id="PR:Q8R496"/>
<dbReference type="Proteomes" id="UP000002494">
    <property type="component" value="Chromosome 6"/>
</dbReference>
<dbReference type="Bgee" id="ENSRNOG00000004534">
    <property type="expression patterns" value="Expressed in testis and 12 other cell types or tissues"/>
</dbReference>
<dbReference type="GO" id="GO:0000781">
    <property type="term" value="C:chromosome, telomeric region"/>
    <property type="evidence" value="ECO:0000266"/>
    <property type="project" value="RGD"/>
</dbReference>
<dbReference type="GO" id="GO:0070971">
    <property type="term" value="C:endoplasmic reticulum exit site"/>
    <property type="evidence" value="ECO:0000266"/>
    <property type="project" value="RGD"/>
</dbReference>
<dbReference type="GO" id="GO:0005635">
    <property type="term" value="C:nuclear envelope"/>
    <property type="evidence" value="ECO:0000266"/>
    <property type="project" value="RGD"/>
</dbReference>
<dbReference type="GO" id="GO:0005654">
    <property type="term" value="C:nucleoplasm"/>
    <property type="evidence" value="ECO:0000318"/>
    <property type="project" value="GO_Central"/>
</dbReference>
<dbReference type="GO" id="GO:0005634">
    <property type="term" value="C:nucleus"/>
    <property type="evidence" value="ECO:0000250"/>
    <property type="project" value="UniProtKB"/>
</dbReference>
<dbReference type="GO" id="GO:0001741">
    <property type="term" value="C:XY body"/>
    <property type="evidence" value="ECO:0000266"/>
    <property type="project" value="RGD"/>
</dbReference>
<dbReference type="GO" id="GO:0030295">
    <property type="term" value="F:protein kinase activator activity"/>
    <property type="evidence" value="ECO:0000266"/>
    <property type="project" value="RGD"/>
</dbReference>
<dbReference type="GO" id="GO:0019901">
    <property type="term" value="F:protein kinase binding"/>
    <property type="evidence" value="ECO:0000250"/>
    <property type="project" value="UniProtKB"/>
</dbReference>
<dbReference type="GO" id="GO:0006974">
    <property type="term" value="P:DNA damage response"/>
    <property type="evidence" value="ECO:0000266"/>
    <property type="project" value="RGD"/>
</dbReference>
<dbReference type="GO" id="GO:0070200">
    <property type="term" value="P:establishment of protein localization to telomere"/>
    <property type="evidence" value="ECO:0000266"/>
    <property type="project" value="RGD"/>
</dbReference>
<dbReference type="GO" id="GO:0000082">
    <property type="term" value="P:G1/S transition of mitotic cell cycle"/>
    <property type="evidence" value="ECO:0000250"/>
    <property type="project" value="UniProtKB"/>
</dbReference>
<dbReference type="GO" id="GO:0007140">
    <property type="term" value="P:male meiotic nuclear division"/>
    <property type="evidence" value="ECO:0000250"/>
    <property type="project" value="UniProtKB"/>
</dbReference>
<dbReference type="GO" id="GO:0070197">
    <property type="term" value="P:meiotic attachment of telomere to nuclear envelope"/>
    <property type="evidence" value="ECO:0000266"/>
    <property type="project" value="RGD"/>
</dbReference>
<dbReference type="GO" id="GO:0048477">
    <property type="term" value="P:oogenesis"/>
    <property type="evidence" value="ECO:0000266"/>
    <property type="project" value="RGD"/>
</dbReference>
<dbReference type="GO" id="GO:0008284">
    <property type="term" value="P:positive regulation of cell population proliferation"/>
    <property type="evidence" value="ECO:0000266"/>
    <property type="project" value="RGD"/>
</dbReference>
<dbReference type="GO" id="GO:0045737">
    <property type="term" value="P:positive regulation of cyclin-dependent protein serine/threonine kinase activity"/>
    <property type="evidence" value="ECO:0000250"/>
    <property type="project" value="UniProtKB"/>
</dbReference>
<dbReference type="GO" id="GO:0010628">
    <property type="term" value="P:positive regulation of gene expression"/>
    <property type="evidence" value="ECO:0000266"/>
    <property type="project" value="RGD"/>
</dbReference>
<dbReference type="GO" id="GO:1904146">
    <property type="term" value="P:positive regulation of meiotic cell cycle process involved in oocyte maturation"/>
    <property type="evidence" value="ECO:0000266"/>
    <property type="project" value="RGD"/>
</dbReference>
<dbReference type="GO" id="GO:0007283">
    <property type="term" value="P:spermatogenesis"/>
    <property type="evidence" value="ECO:0000266"/>
    <property type="project" value="RGD"/>
</dbReference>
<dbReference type="GO" id="GO:0016233">
    <property type="term" value="P:telomere capping"/>
    <property type="evidence" value="ECO:0000266"/>
    <property type="project" value="RGD"/>
</dbReference>
<dbReference type="InterPro" id="IPR020984">
    <property type="entry name" value="Speedy"/>
</dbReference>
<dbReference type="InterPro" id="IPR052316">
    <property type="entry name" value="Speedy-Ringo_regulator"/>
</dbReference>
<dbReference type="PANTHER" id="PTHR31545">
    <property type="entry name" value="SEEDY PROTEIN A/C FAMILY MEMBER"/>
    <property type="match status" value="1"/>
</dbReference>
<dbReference type="PANTHER" id="PTHR31545:SF4">
    <property type="entry name" value="SPEEDY PROTEIN A"/>
    <property type="match status" value="1"/>
</dbReference>
<dbReference type="Pfam" id="PF11357">
    <property type="entry name" value="Spy1"/>
    <property type="match status" value="1"/>
</dbReference>
<reference evidence="4" key="1">
    <citation type="submission" date="2002-03" db="EMBL/GenBank/DDBJ databases">
        <title>Gene related to spermatogenesis.</title>
        <authorList>
            <person name="Zhao L."/>
            <person name="Jia M."/>
        </authorList>
    </citation>
    <scope>NUCLEOTIDE SEQUENCE [MRNA]</scope>
    <source>
        <tissue evidence="4">Testis</tissue>
    </source>
</reference>
<reference key="2">
    <citation type="journal article" date="2004" name="Genome Res.">
        <title>The status, quality, and expansion of the NIH full-length cDNA project: the Mammalian Gene Collection (MGC).</title>
        <authorList>
            <consortium name="The MGC Project Team"/>
        </authorList>
    </citation>
    <scope>NUCLEOTIDE SEQUENCE [LARGE SCALE MRNA]</scope>
    <source>
        <tissue>Testis</tissue>
    </source>
</reference>
<organism>
    <name type="scientific">Rattus norvegicus</name>
    <name type="common">Rat</name>
    <dbReference type="NCBI Taxonomy" id="10116"/>
    <lineage>
        <taxon>Eukaryota</taxon>
        <taxon>Metazoa</taxon>
        <taxon>Chordata</taxon>
        <taxon>Craniata</taxon>
        <taxon>Vertebrata</taxon>
        <taxon>Euteleostomi</taxon>
        <taxon>Mammalia</taxon>
        <taxon>Eutheria</taxon>
        <taxon>Euarchontoglires</taxon>
        <taxon>Glires</taxon>
        <taxon>Rodentia</taxon>
        <taxon>Myomorpha</taxon>
        <taxon>Muroidea</taxon>
        <taxon>Muridae</taxon>
        <taxon>Murinae</taxon>
        <taxon>Rattus</taxon>
    </lineage>
</organism>